<feature type="chain" id="PRO_1000147653" description="Small, acid-soluble spore protein I">
    <location>
        <begin position="1"/>
        <end position="69"/>
    </location>
</feature>
<keyword id="KW-0749">Sporulation</keyword>
<comment type="subcellular location">
    <subcellularLocation>
        <location evidence="1">Spore core</location>
    </subcellularLocation>
</comment>
<comment type="induction">
    <text evidence="1">Expressed only in the forespore compartment of sporulating cells.</text>
</comment>
<comment type="similarity">
    <text evidence="1">Belongs to the SspI family.</text>
</comment>
<proteinExistence type="inferred from homology"/>
<dbReference type="EMBL" id="CP001598">
    <property type="protein sequence ID" value="ACQ48524.1"/>
    <property type="molecule type" value="Genomic_DNA"/>
</dbReference>
<dbReference type="RefSeq" id="WP_000009513.1">
    <property type="nucleotide sequence ID" value="NC_012659.1"/>
</dbReference>
<dbReference type="SMR" id="C3PAF1"/>
<dbReference type="GeneID" id="93006545"/>
<dbReference type="KEGG" id="bai:BAA_4816"/>
<dbReference type="HOGENOM" id="CLU_188877_0_0_9"/>
<dbReference type="GO" id="GO:0030436">
    <property type="term" value="P:asexual sporulation"/>
    <property type="evidence" value="ECO:0007669"/>
    <property type="project" value="UniProtKB-UniRule"/>
</dbReference>
<dbReference type="GO" id="GO:0030435">
    <property type="term" value="P:sporulation resulting in formation of a cellular spore"/>
    <property type="evidence" value="ECO:0007669"/>
    <property type="project" value="UniProtKB-KW"/>
</dbReference>
<dbReference type="HAMAP" id="MF_00669">
    <property type="entry name" value="SspI"/>
    <property type="match status" value="1"/>
</dbReference>
<dbReference type="InterPro" id="IPR017525">
    <property type="entry name" value="SspI"/>
</dbReference>
<dbReference type="NCBIfam" id="TIGR03092">
    <property type="entry name" value="SASP_sspI"/>
    <property type="match status" value="1"/>
</dbReference>
<dbReference type="Pfam" id="PF14098">
    <property type="entry name" value="SSPI"/>
    <property type="match status" value="1"/>
</dbReference>
<sequence length="69" mass="7687">MSFNLRGAVLANVSGNTQDQLQETIVDAIQSGEEKMLPGLGVLFEVIWKNADENEKHEMLETLEQGLKK</sequence>
<reference key="1">
    <citation type="submission" date="2009-04" db="EMBL/GenBank/DDBJ databases">
        <title>Genome sequence of Bacillus anthracis A0248.</title>
        <authorList>
            <person name="Dodson R.J."/>
            <person name="Munk A.C."/>
            <person name="Bruce D."/>
            <person name="Detter C."/>
            <person name="Tapia R."/>
            <person name="Sutton G."/>
            <person name="Sims D."/>
            <person name="Brettin T."/>
        </authorList>
    </citation>
    <scope>NUCLEOTIDE SEQUENCE [LARGE SCALE GENOMIC DNA]</scope>
    <source>
        <strain>A0248</strain>
    </source>
</reference>
<accession>C3PAF1</accession>
<name>SSPI_BACAA</name>
<gene>
    <name evidence="1" type="primary">sspI</name>
    <name type="ordered locus">BAA_4816</name>
</gene>
<evidence type="ECO:0000255" key="1">
    <source>
        <dbReference type="HAMAP-Rule" id="MF_00669"/>
    </source>
</evidence>
<organism>
    <name type="scientific">Bacillus anthracis (strain A0248)</name>
    <dbReference type="NCBI Taxonomy" id="592021"/>
    <lineage>
        <taxon>Bacteria</taxon>
        <taxon>Bacillati</taxon>
        <taxon>Bacillota</taxon>
        <taxon>Bacilli</taxon>
        <taxon>Bacillales</taxon>
        <taxon>Bacillaceae</taxon>
        <taxon>Bacillus</taxon>
        <taxon>Bacillus cereus group</taxon>
    </lineage>
</organism>
<protein>
    <recommendedName>
        <fullName evidence="1">Small, acid-soluble spore protein I</fullName>
        <shortName evidence="1">SASP I</shortName>
    </recommendedName>
</protein>